<sequence length="427" mass="46980">MARLGDGGDLLKCSFCGKSQKQVKKLIAGPGVYICDECIDLCNEIIEEELSESHEPKFDQLPKPREICEFLDQYVIGQETAKKALSVAVYNHYKRIQVGGSSRSSNDSVELAKSNILLIGPTGCGKTYLAQTLARMLNVPFAIADATALTEAGYVGEDVENILLKLIQAADYDVKRAETGIIYIDEIDKIARKSENPSITRDVSGEGVQQALLKILEGTTASVPPQGGRKHPHQEFIQIDTTNILFIVGGAFAGLEKIIEARIGKKGIGFTATLHGKRDLNTADIFSHVMPEDLLKYGMIPEFVGRLPVITTVTSLDREALIRILTEPKNALVRQYQRLFELDSVDLEFTDDALEAIADQAILRGTGARGLRAIMEEVLLSVMYDIPSRTDVARVVITRDVVLNNVNPTLVPRDSVVAKRERREKTA</sequence>
<gene>
    <name evidence="1" type="primary">clpX</name>
    <name type="ordered locus">Acel_0739</name>
</gene>
<dbReference type="EMBL" id="CP000481">
    <property type="protein sequence ID" value="ABK52512.1"/>
    <property type="molecule type" value="Genomic_DNA"/>
</dbReference>
<dbReference type="RefSeq" id="WP_011719575.1">
    <property type="nucleotide sequence ID" value="NC_008578.1"/>
</dbReference>
<dbReference type="SMR" id="A0LSV2"/>
<dbReference type="FunCoup" id="A0LSV2">
    <property type="interactions" value="255"/>
</dbReference>
<dbReference type="STRING" id="351607.Acel_0739"/>
<dbReference type="KEGG" id="ace:Acel_0739"/>
<dbReference type="eggNOG" id="COG1219">
    <property type="taxonomic scope" value="Bacteria"/>
</dbReference>
<dbReference type="HOGENOM" id="CLU_014218_8_2_11"/>
<dbReference type="InParanoid" id="A0LSV2"/>
<dbReference type="OrthoDB" id="9804062at2"/>
<dbReference type="Proteomes" id="UP000008221">
    <property type="component" value="Chromosome"/>
</dbReference>
<dbReference type="GO" id="GO:0009376">
    <property type="term" value="C:HslUV protease complex"/>
    <property type="evidence" value="ECO:0007669"/>
    <property type="project" value="TreeGrafter"/>
</dbReference>
<dbReference type="GO" id="GO:0005524">
    <property type="term" value="F:ATP binding"/>
    <property type="evidence" value="ECO:0007669"/>
    <property type="project" value="UniProtKB-UniRule"/>
</dbReference>
<dbReference type="GO" id="GO:0016887">
    <property type="term" value="F:ATP hydrolysis activity"/>
    <property type="evidence" value="ECO:0007669"/>
    <property type="project" value="InterPro"/>
</dbReference>
<dbReference type="GO" id="GO:0140662">
    <property type="term" value="F:ATP-dependent protein folding chaperone"/>
    <property type="evidence" value="ECO:0007669"/>
    <property type="project" value="InterPro"/>
</dbReference>
<dbReference type="GO" id="GO:0046983">
    <property type="term" value="F:protein dimerization activity"/>
    <property type="evidence" value="ECO:0007669"/>
    <property type="project" value="InterPro"/>
</dbReference>
<dbReference type="GO" id="GO:0051082">
    <property type="term" value="F:unfolded protein binding"/>
    <property type="evidence" value="ECO:0007669"/>
    <property type="project" value="UniProtKB-UniRule"/>
</dbReference>
<dbReference type="GO" id="GO:0008270">
    <property type="term" value="F:zinc ion binding"/>
    <property type="evidence" value="ECO:0007669"/>
    <property type="project" value="InterPro"/>
</dbReference>
<dbReference type="GO" id="GO:0051301">
    <property type="term" value="P:cell division"/>
    <property type="evidence" value="ECO:0007669"/>
    <property type="project" value="TreeGrafter"/>
</dbReference>
<dbReference type="GO" id="GO:0051603">
    <property type="term" value="P:proteolysis involved in protein catabolic process"/>
    <property type="evidence" value="ECO:0007669"/>
    <property type="project" value="TreeGrafter"/>
</dbReference>
<dbReference type="CDD" id="cd19497">
    <property type="entry name" value="RecA-like_ClpX"/>
    <property type="match status" value="1"/>
</dbReference>
<dbReference type="FunFam" id="1.10.8.60:FF:000002">
    <property type="entry name" value="ATP-dependent Clp protease ATP-binding subunit ClpX"/>
    <property type="match status" value="1"/>
</dbReference>
<dbReference type="FunFam" id="3.40.50.300:FF:000005">
    <property type="entry name" value="ATP-dependent Clp protease ATP-binding subunit ClpX"/>
    <property type="match status" value="1"/>
</dbReference>
<dbReference type="Gene3D" id="1.10.8.60">
    <property type="match status" value="1"/>
</dbReference>
<dbReference type="Gene3D" id="6.20.220.10">
    <property type="entry name" value="ClpX chaperone, C4-type zinc finger domain"/>
    <property type="match status" value="1"/>
</dbReference>
<dbReference type="Gene3D" id="3.40.50.300">
    <property type="entry name" value="P-loop containing nucleotide triphosphate hydrolases"/>
    <property type="match status" value="1"/>
</dbReference>
<dbReference type="HAMAP" id="MF_00175">
    <property type="entry name" value="ClpX"/>
    <property type="match status" value="1"/>
</dbReference>
<dbReference type="InterPro" id="IPR003593">
    <property type="entry name" value="AAA+_ATPase"/>
</dbReference>
<dbReference type="InterPro" id="IPR050052">
    <property type="entry name" value="ATP-dep_Clp_protease_ClpX"/>
</dbReference>
<dbReference type="InterPro" id="IPR003959">
    <property type="entry name" value="ATPase_AAA_core"/>
</dbReference>
<dbReference type="InterPro" id="IPR019489">
    <property type="entry name" value="Clp_ATPase_C"/>
</dbReference>
<dbReference type="InterPro" id="IPR004487">
    <property type="entry name" value="Clp_protease_ATP-bd_su_ClpX"/>
</dbReference>
<dbReference type="InterPro" id="IPR046425">
    <property type="entry name" value="ClpX_bact"/>
</dbReference>
<dbReference type="InterPro" id="IPR027417">
    <property type="entry name" value="P-loop_NTPase"/>
</dbReference>
<dbReference type="InterPro" id="IPR010603">
    <property type="entry name" value="Znf_CppX_C4"/>
</dbReference>
<dbReference type="InterPro" id="IPR038366">
    <property type="entry name" value="Znf_CppX_C4_sf"/>
</dbReference>
<dbReference type="NCBIfam" id="TIGR00382">
    <property type="entry name" value="clpX"/>
    <property type="match status" value="1"/>
</dbReference>
<dbReference type="NCBIfam" id="NF003745">
    <property type="entry name" value="PRK05342.1"/>
    <property type="match status" value="1"/>
</dbReference>
<dbReference type="PANTHER" id="PTHR48102:SF7">
    <property type="entry name" value="ATP-DEPENDENT CLP PROTEASE ATP-BINDING SUBUNIT CLPX-LIKE, MITOCHONDRIAL"/>
    <property type="match status" value="1"/>
</dbReference>
<dbReference type="PANTHER" id="PTHR48102">
    <property type="entry name" value="ATP-DEPENDENT CLP PROTEASE ATP-BINDING SUBUNIT CLPX-LIKE, MITOCHONDRIAL-RELATED"/>
    <property type="match status" value="1"/>
</dbReference>
<dbReference type="Pfam" id="PF07724">
    <property type="entry name" value="AAA_2"/>
    <property type="match status" value="1"/>
</dbReference>
<dbReference type="Pfam" id="PF10431">
    <property type="entry name" value="ClpB_D2-small"/>
    <property type="match status" value="1"/>
</dbReference>
<dbReference type="Pfam" id="PF06689">
    <property type="entry name" value="zf-C4_ClpX"/>
    <property type="match status" value="1"/>
</dbReference>
<dbReference type="SMART" id="SM00382">
    <property type="entry name" value="AAA"/>
    <property type="match status" value="1"/>
</dbReference>
<dbReference type="SMART" id="SM01086">
    <property type="entry name" value="ClpB_D2-small"/>
    <property type="match status" value="1"/>
</dbReference>
<dbReference type="SMART" id="SM00994">
    <property type="entry name" value="zf-C4_ClpX"/>
    <property type="match status" value="1"/>
</dbReference>
<dbReference type="SUPFAM" id="SSF57716">
    <property type="entry name" value="Glucocorticoid receptor-like (DNA-binding domain)"/>
    <property type="match status" value="1"/>
</dbReference>
<dbReference type="SUPFAM" id="SSF52540">
    <property type="entry name" value="P-loop containing nucleoside triphosphate hydrolases"/>
    <property type="match status" value="1"/>
</dbReference>
<dbReference type="PROSITE" id="PS51902">
    <property type="entry name" value="CLPX_ZB"/>
    <property type="match status" value="1"/>
</dbReference>
<evidence type="ECO:0000255" key="1">
    <source>
        <dbReference type="HAMAP-Rule" id="MF_00175"/>
    </source>
</evidence>
<evidence type="ECO:0000255" key="2">
    <source>
        <dbReference type="PROSITE-ProRule" id="PRU01250"/>
    </source>
</evidence>
<comment type="function">
    <text evidence="1">ATP-dependent specificity component of the Clp protease. It directs the protease to specific substrates. Can perform chaperone functions in the absence of ClpP.</text>
</comment>
<comment type="subunit">
    <text evidence="1">Component of the ClpX-ClpP complex. Forms a hexameric ring that, in the presence of ATP, binds to fourteen ClpP subunits assembled into a disk-like structure with a central cavity, resembling the structure of eukaryotic proteasomes.</text>
</comment>
<comment type="similarity">
    <text evidence="1">Belongs to the ClpX chaperone family.</text>
</comment>
<name>CLPX_ACIC1</name>
<accession>A0LSV2</accession>
<feature type="chain" id="PRO_1000024507" description="ATP-dependent Clp protease ATP-binding subunit ClpX">
    <location>
        <begin position="1"/>
        <end position="427"/>
    </location>
</feature>
<feature type="domain" description="ClpX-type ZB" evidence="2">
    <location>
        <begin position="1"/>
        <end position="54"/>
    </location>
</feature>
<feature type="binding site" evidence="2">
    <location>
        <position position="13"/>
    </location>
    <ligand>
        <name>Zn(2+)</name>
        <dbReference type="ChEBI" id="CHEBI:29105"/>
    </ligand>
</feature>
<feature type="binding site" evidence="2">
    <location>
        <position position="16"/>
    </location>
    <ligand>
        <name>Zn(2+)</name>
        <dbReference type="ChEBI" id="CHEBI:29105"/>
    </ligand>
</feature>
<feature type="binding site" evidence="2">
    <location>
        <position position="35"/>
    </location>
    <ligand>
        <name>Zn(2+)</name>
        <dbReference type="ChEBI" id="CHEBI:29105"/>
    </ligand>
</feature>
<feature type="binding site" evidence="2">
    <location>
        <position position="38"/>
    </location>
    <ligand>
        <name>Zn(2+)</name>
        <dbReference type="ChEBI" id="CHEBI:29105"/>
    </ligand>
</feature>
<feature type="binding site" evidence="1">
    <location>
        <begin position="121"/>
        <end position="128"/>
    </location>
    <ligand>
        <name>ATP</name>
        <dbReference type="ChEBI" id="CHEBI:30616"/>
    </ligand>
</feature>
<protein>
    <recommendedName>
        <fullName evidence="1">ATP-dependent Clp protease ATP-binding subunit ClpX</fullName>
    </recommendedName>
</protein>
<proteinExistence type="inferred from homology"/>
<reference key="1">
    <citation type="journal article" date="2009" name="Genome Res.">
        <title>Complete genome of the cellulolytic thermophile Acidothermus cellulolyticus 11B provides insights into its ecophysiological and evolutionary adaptations.</title>
        <authorList>
            <person name="Barabote R.D."/>
            <person name="Xie G."/>
            <person name="Leu D.H."/>
            <person name="Normand P."/>
            <person name="Necsulea A."/>
            <person name="Daubin V."/>
            <person name="Medigue C."/>
            <person name="Adney W.S."/>
            <person name="Xu X.C."/>
            <person name="Lapidus A."/>
            <person name="Parales R.E."/>
            <person name="Detter C."/>
            <person name="Pujic P."/>
            <person name="Bruce D."/>
            <person name="Lavire C."/>
            <person name="Challacombe J.F."/>
            <person name="Brettin T.S."/>
            <person name="Berry A.M."/>
        </authorList>
    </citation>
    <scope>NUCLEOTIDE SEQUENCE [LARGE SCALE GENOMIC DNA]</scope>
    <source>
        <strain>ATCC 43068 / DSM 8971 / 11B</strain>
    </source>
</reference>
<organism>
    <name type="scientific">Acidothermus cellulolyticus (strain ATCC 43068 / DSM 8971 / 11B)</name>
    <dbReference type="NCBI Taxonomy" id="351607"/>
    <lineage>
        <taxon>Bacteria</taxon>
        <taxon>Bacillati</taxon>
        <taxon>Actinomycetota</taxon>
        <taxon>Actinomycetes</taxon>
        <taxon>Acidothermales</taxon>
        <taxon>Acidothermaceae</taxon>
        <taxon>Acidothermus</taxon>
    </lineage>
</organism>
<keyword id="KW-0067">ATP-binding</keyword>
<keyword id="KW-0143">Chaperone</keyword>
<keyword id="KW-0479">Metal-binding</keyword>
<keyword id="KW-0547">Nucleotide-binding</keyword>
<keyword id="KW-1185">Reference proteome</keyword>
<keyword id="KW-0862">Zinc</keyword>